<protein>
    <recommendedName>
        <fullName evidence="4">Class I hydrophobin 12</fullName>
    </recommendedName>
</protein>
<dbReference type="EMBL" id="KL198014">
    <property type="protein sequence ID" value="KDQ22804.1"/>
    <property type="molecule type" value="Genomic_DNA"/>
</dbReference>
<dbReference type="STRING" id="1137138.A0A067N4P3"/>
<dbReference type="VEuPathDB" id="FungiDB:PLEOSDRAFT_1114709"/>
<dbReference type="HOGENOM" id="CLU_105134_2_0_1"/>
<dbReference type="InParanoid" id="A0A067N4P3"/>
<dbReference type="OrthoDB" id="138913at5338"/>
<dbReference type="Proteomes" id="UP000027073">
    <property type="component" value="Unassembled WGS sequence"/>
</dbReference>
<dbReference type="GO" id="GO:0005576">
    <property type="term" value="C:extracellular region"/>
    <property type="evidence" value="ECO:0007669"/>
    <property type="project" value="UniProtKB-KW"/>
</dbReference>
<dbReference type="GO" id="GO:0009277">
    <property type="term" value="C:fungal-type cell wall"/>
    <property type="evidence" value="ECO:0007669"/>
    <property type="project" value="InterPro"/>
</dbReference>
<dbReference type="GO" id="GO:0005199">
    <property type="term" value="F:structural constituent of cell wall"/>
    <property type="evidence" value="ECO:0007669"/>
    <property type="project" value="InterPro"/>
</dbReference>
<dbReference type="CDD" id="cd23507">
    <property type="entry name" value="hydrophobin_I"/>
    <property type="match status" value="1"/>
</dbReference>
<dbReference type="InterPro" id="IPR001338">
    <property type="entry name" value="Hydrophobin"/>
</dbReference>
<dbReference type="Pfam" id="PF01185">
    <property type="entry name" value="Hydrophobin"/>
    <property type="match status" value="1"/>
</dbReference>
<dbReference type="SMART" id="SM00075">
    <property type="entry name" value="HYDRO"/>
    <property type="match status" value="1"/>
</dbReference>
<proteinExistence type="evidence at transcript level"/>
<reference key="1">
    <citation type="journal article" date="2014" name="Proc. Natl. Acad. Sci. U.S.A.">
        <title>Extensive sampling of basidiomycete genomes demonstrates inadequacy of the white-rot/brown-rot paradigm for wood decay fungi.</title>
        <authorList>
            <person name="Riley R."/>
            <person name="Salamov A.A."/>
            <person name="Brown D.W."/>
            <person name="Nagy L.G."/>
            <person name="Floudas D."/>
            <person name="Held B.W."/>
            <person name="Levasseur A."/>
            <person name="Lombard V."/>
            <person name="Morin E."/>
            <person name="Otillar R."/>
            <person name="Lindquist E.A."/>
            <person name="Sun H."/>
            <person name="LaButti K.M."/>
            <person name="Schmutz J."/>
            <person name="Jabbour D."/>
            <person name="Luo H."/>
            <person name="Baker S.E."/>
            <person name="Pisabarro A.G."/>
            <person name="Walton J.D."/>
            <person name="Blanchette R.A."/>
            <person name="Henrissat B."/>
            <person name="Martin F."/>
            <person name="Cullen D."/>
            <person name="Hibbett D.S."/>
            <person name="Grigoriev I.V."/>
        </authorList>
    </citation>
    <scope>NUCLEOTIDE SEQUENCE [LARGE SCALE GENOMIC DNA]</scope>
    <source>
        <strain>PC15</strain>
    </source>
</reference>
<reference key="2">
    <citation type="journal article" date="2021" name="Microbiol. Res.">
        <title>Identification of hydrophobin genes and their physiological functions related to growth and development in Pleurotus ostreatus.</title>
        <authorList>
            <person name="Xu D."/>
            <person name="Wang Y."/>
            <person name="Keerio A.A."/>
            <person name="Ma A."/>
        </authorList>
    </citation>
    <scope>IDENTIFICATION</scope>
    <scope>FUNCTION</scope>
    <scope>INDUCTION</scope>
    <scope>DEVELOPMENTAL STAGE</scope>
</reference>
<organism>
    <name type="scientific">Pleurotus ostreatus (strain PC15)</name>
    <name type="common">Oyster mushroom</name>
    <dbReference type="NCBI Taxonomy" id="1137138"/>
    <lineage>
        <taxon>Eukaryota</taxon>
        <taxon>Fungi</taxon>
        <taxon>Dikarya</taxon>
        <taxon>Basidiomycota</taxon>
        <taxon>Agaricomycotina</taxon>
        <taxon>Agaricomycetes</taxon>
        <taxon>Agaricomycetidae</taxon>
        <taxon>Agaricales</taxon>
        <taxon>Pleurotineae</taxon>
        <taxon>Pleurotaceae</taxon>
        <taxon>Pleurotus</taxon>
    </lineage>
</organism>
<name>HYD12_PLEO1</name>
<keyword id="KW-0134">Cell wall</keyword>
<keyword id="KW-1015">Disulfide bond</keyword>
<keyword id="KW-1185">Reference proteome</keyword>
<keyword id="KW-0964">Secreted</keyword>
<keyword id="KW-0732">Signal</keyword>
<feature type="signal peptide" evidence="2">
    <location>
        <begin position="1"/>
        <end position="25"/>
    </location>
</feature>
<feature type="chain" id="PRO_5013988165" description="Class I hydrophobin 12">
    <location>
        <begin position="26"/>
        <end position="104"/>
    </location>
</feature>
<feature type="disulfide bond" evidence="1">
    <location>
        <begin position="27"/>
        <end position="85"/>
    </location>
</feature>
<feature type="disulfide bond" evidence="1">
    <location>
        <begin position="34"/>
        <end position="79"/>
    </location>
</feature>
<feature type="disulfide bond" evidence="1">
    <location>
        <begin position="35"/>
        <end position="67"/>
    </location>
</feature>
<feature type="disulfide bond" evidence="1">
    <location>
        <begin position="86"/>
        <end position="99"/>
    </location>
</feature>
<evidence type="ECO:0000250" key="1">
    <source>
        <dbReference type="UniProtKB" id="Q04571"/>
    </source>
</evidence>
<evidence type="ECO:0000255" key="2"/>
<evidence type="ECO:0000269" key="3">
    <source>
    </source>
</evidence>
<evidence type="ECO:0000303" key="4">
    <source>
    </source>
</evidence>
<evidence type="ECO:0000305" key="5"/>
<evidence type="ECO:0000305" key="6">
    <source>
    </source>
</evidence>
<accession>A0A067N4P3</accession>
<gene>
    <name evidence="4" type="primary">Hydph12</name>
    <name type="ORF">PLEOSDRAFT_1114709</name>
</gene>
<sequence length="104" mass="10487">MFSKATLFFTAAVVIVAAGATPTTSQCNTGPVQCCDHTQQASGPTTLTGIGEVDLGDTSTLIAYGNCSPVLPVLGGPKCQGQTVCCDNTEFEGLVNVGCTNVAV</sequence>
<comment type="function">
    <text evidence="3 5">Aerial growth, conidiation, and dispersal of filamentous fungi in the environment rely upon a capability of their secreting small amphipathic proteins called hydrophobins (HPBs) with low sequence identity. Class I can self-assemble into an outermost layer of rodlet bundles on aerial cell surfaces, conferring cellular hydrophobicity that supports fungal growth, development and dispersal; whereas Class II form highly ordered films at water-air interfaces through intermolecular interactions but contribute nothing to the rodlet structure (Probable). Hydph12 is a class I hydrophobin involved in the formation of mycelium knots (PubMed:33636611).</text>
</comment>
<comment type="subunit">
    <text evidence="1">Self-assembles to form functional amyloid fibrils called rodlets. Self-assembly into fibrillar rodlets occurs spontaneously at hydrophobic:hydrophilic interfaces and the rodlets further associate laterally to form amphipathic monolayers.</text>
</comment>
<comment type="subcellular location">
    <subcellularLocation>
        <location evidence="6">Secreted</location>
    </subcellularLocation>
    <subcellularLocation>
        <location evidence="6">Secreted</location>
        <location evidence="6">Cell wall</location>
    </subcellularLocation>
</comment>
<comment type="developmental stage">
    <text evidence="3">Highly expressed in primordia and young fruiting bodies.</text>
</comment>
<comment type="induction">
    <text evidence="3">Expression is induced by natural light and low temperature.</text>
</comment>
<comment type="similarity">
    <text evidence="5">Belongs to the fungal hydrophobin family.</text>
</comment>